<accession>Q9LIJ0</accession>
<accession>A0A1I9LN91</accession>
<accession>B7XG82</accession>
<gene>
    <name type="primary">LBD26</name>
    <name type="synonym">ASL28</name>
    <name type="ordered locus">At3g27940</name>
    <name type="ORF">K24A2.3</name>
</gene>
<protein>
    <recommendedName>
        <fullName>LOB domain-containing protein 26</fullName>
    </recommendedName>
    <alternativeName>
        <fullName>ASYMMETRIC LEAVES 2-like protein 28</fullName>
        <shortName>AS2-like protein 28</shortName>
    </alternativeName>
</protein>
<sequence>MNANPCEVCRFQNKQCVNNCMFALLFPSSDLEKFDVVNRIFGLETLTFYLKDLSPMERIDTTRTLYYEAKPCFLNPPKNPSKFLEALLNYPYQKAEEVSKTKKLLASYSRPCVVLALPAPKYTQSKSKPSVLRKRKRKTKSSDESAIRVVEDS</sequence>
<organism>
    <name type="scientific">Arabidopsis thaliana</name>
    <name type="common">Mouse-ear cress</name>
    <dbReference type="NCBI Taxonomy" id="3702"/>
    <lineage>
        <taxon>Eukaryota</taxon>
        <taxon>Viridiplantae</taxon>
        <taxon>Streptophyta</taxon>
        <taxon>Embryophyta</taxon>
        <taxon>Tracheophyta</taxon>
        <taxon>Spermatophyta</taxon>
        <taxon>Magnoliopsida</taxon>
        <taxon>eudicotyledons</taxon>
        <taxon>Gunneridae</taxon>
        <taxon>Pentapetalae</taxon>
        <taxon>rosids</taxon>
        <taxon>malvids</taxon>
        <taxon>Brassicales</taxon>
        <taxon>Brassicaceae</taxon>
        <taxon>Camelineae</taxon>
        <taxon>Arabidopsis</taxon>
    </lineage>
</organism>
<evidence type="ECO:0000255" key="1">
    <source>
        <dbReference type="PROSITE-ProRule" id="PRU00291"/>
    </source>
</evidence>
<evidence type="ECO:0000256" key="2">
    <source>
        <dbReference type="SAM" id="MobiDB-lite"/>
    </source>
</evidence>
<evidence type="ECO:0000305" key="3"/>
<dbReference type="EMBL" id="AB473861">
    <property type="protein sequence ID" value="BAH10572.1"/>
    <property type="molecule type" value="mRNA"/>
</dbReference>
<dbReference type="EMBL" id="AP001302">
    <property type="protein sequence ID" value="BAB01481.1"/>
    <property type="status" value="ALT_SEQ"/>
    <property type="molecule type" value="Genomic_DNA"/>
</dbReference>
<dbReference type="EMBL" id="CP002686">
    <property type="protein sequence ID" value="AEE77384.1"/>
    <property type="molecule type" value="Genomic_DNA"/>
</dbReference>
<dbReference type="EMBL" id="CP002686">
    <property type="protein sequence ID" value="ANM64049.1"/>
    <property type="molecule type" value="Genomic_DNA"/>
</dbReference>
<dbReference type="EMBL" id="CP002686">
    <property type="protein sequence ID" value="ANM64050.1"/>
    <property type="molecule type" value="Genomic_DNA"/>
</dbReference>
<dbReference type="EMBL" id="AK118484">
    <property type="protein sequence ID" value="BAC43088.1"/>
    <property type="molecule type" value="mRNA"/>
</dbReference>
<dbReference type="EMBL" id="BT003673">
    <property type="protein sequence ID" value="AAO39901.1"/>
    <property type="molecule type" value="mRNA"/>
</dbReference>
<dbReference type="RefSeq" id="NP_001326100.1">
    <property type="nucleotide sequence ID" value="NM_001338923.1"/>
</dbReference>
<dbReference type="RefSeq" id="NP_001326101.1">
    <property type="nucleotide sequence ID" value="NM_001338924.1"/>
</dbReference>
<dbReference type="RefSeq" id="NP_189433.1">
    <property type="nucleotide sequence ID" value="NM_113711.3"/>
</dbReference>
<dbReference type="SMR" id="Q9LIJ0"/>
<dbReference type="BioGRID" id="7748">
    <property type="interactions" value="8"/>
</dbReference>
<dbReference type="IntAct" id="Q9LIJ0">
    <property type="interactions" value="8"/>
</dbReference>
<dbReference type="STRING" id="3702.Q9LIJ0"/>
<dbReference type="PaxDb" id="3702-AT3G27940.1"/>
<dbReference type="DNASU" id="822418"/>
<dbReference type="EnsemblPlants" id="AT3G27940.1">
    <property type="protein sequence ID" value="AT3G27940.1"/>
    <property type="gene ID" value="AT3G27940"/>
</dbReference>
<dbReference type="EnsemblPlants" id="AT3G27940.2">
    <property type="protein sequence ID" value="AT3G27940.2"/>
    <property type="gene ID" value="AT3G27940"/>
</dbReference>
<dbReference type="EnsemblPlants" id="AT3G27940.3">
    <property type="protein sequence ID" value="AT3G27940.3"/>
    <property type="gene ID" value="AT3G27940"/>
</dbReference>
<dbReference type="GeneID" id="822418"/>
<dbReference type="Gramene" id="AT3G27940.1">
    <property type="protein sequence ID" value="AT3G27940.1"/>
    <property type="gene ID" value="AT3G27940"/>
</dbReference>
<dbReference type="Gramene" id="AT3G27940.2">
    <property type="protein sequence ID" value="AT3G27940.2"/>
    <property type="gene ID" value="AT3G27940"/>
</dbReference>
<dbReference type="Gramene" id="AT3G27940.3">
    <property type="protein sequence ID" value="AT3G27940.3"/>
    <property type="gene ID" value="AT3G27940"/>
</dbReference>
<dbReference type="KEGG" id="ath:AT3G27940"/>
<dbReference type="Araport" id="AT3G27940"/>
<dbReference type="TAIR" id="AT3G27940">
    <property type="gene designation" value="LBD26"/>
</dbReference>
<dbReference type="HOGENOM" id="CLU_1899063_0_0_1"/>
<dbReference type="InParanoid" id="Q9LIJ0"/>
<dbReference type="OMA" id="NANPCEV"/>
<dbReference type="PhylomeDB" id="Q9LIJ0"/>
<dbReference type="PRO" id="PR:Q9LIJ0"/>
<dbReference type="Proteomes" id="UP000006548">
    <property type="component" value="Chromosome 3"/>
</dbReference>
<dbReference type="ExpressionAtlas" id="Q9LIJ0">
    <property type="expression patterns" value="baseline and differential"/>
</dbReference>
<dbReference type="InterPro" id="IPR004883">
    <property type="entry name" value="LOB"/>
</dbReference>
<dbReference type="PANTHER" id="PTHR31301:SF153">
    <property type="entry name" value="LOB DOMAIN-CONTAINING PROTEIN 26"/>
    <property type="match status" value="1"/>
</dbReference>
<dbReference type="PANTHER" id="PTHR31301">
    <property type="entry name" value="LOB DOMAIN-CONTAINING PROTEIN 4-RELATED"/>
    <property type="match status" value="1"/>
</dbReference>
<dbReference type="Pfam" id="PF03195">
    <property type="entry name" value="LOB"/>
    <property type="match status" value="1"/>
</dbReference>
<dbReference type="PROSITE" id="PS50891">
    <property type="entry name" value="LOB"/>
    <property type="match status" value="1"/>
</dbReference>
<reference key="1">
    <citation type="journal article" date="2009" name="Plant J.">
        <title>Characterization of genes in the ASYMMETRIC LEAVES2/LATERAL ORGAN BOUNDARIES (AS2/LOB) family in Arabidopsis thaliana, and functional and molecular comparisons between AS2 and other family members.</title>
        <authorList>
            <person name="Matsumura Y."/>
            <person name="Iwakawa H."/>
            <person name="Machida Y."/>
            <person name="Machida C."/>
        </authorList>
    </citation>
    <scope>NUCLEOTIDE SEQUENCE [MRNA]</scope>
    <source>
        <strain>cv. Columbia</strain>
    </source>
</reference>
<reference key="2">
    <citation type="journal article" date="2000" name="DNA Res.">
        <title>Structural analysis of Arabidopsis thaliana chromosome 3. II. Sequence features of the 4,251,695 bp regions covered by 90 P1, TAC and BAC clones.</title>
        <authorList>
            <person name="Kaneko T."/>
            <person name="Katoh T."/>
            <person name="Sato S."/>
            <person name="Nakamura Y."/>
            <person name="Asamizu E."/>
            <person name="Tabata S."/>
        </authorList>
    </citation>
    <scope>NUCLEOTIDE SEQUENCE [LARGE SCALE GENOMIC DNA]</scope>
    <source>
        <strain>cv. Columbia</strain>
    </source>
</reference>
<reference key="3">
    <citation type="journal article" date="2017" name="Plant J.">
        <title>Araport11: a complete reannotation of the Arabidopsis thaliana reference genome.</title>
        <authorList>
            <person name="Cheng C.Y."/>
            <person name="Krishnakumar V."/>
            <person name="Chan A.P."/>
            <person name="Thibaud-Nissen F."/>
            <person name="Schobel S."/>
            <person name="Town C.D."/>
        </authorList>
    </citation>
    <scope>GENOME REANNOTATION</scope>
    <source>
        <strain>cv. Columbia</strain>
    </source>
</reference>
<reference key="4">
    <citation type="journal article" date="2002" name="Science">
        <title>Functional annotation of a full-length Arabidopsis cDNA collection.</title>
        <authorList>
            <person name="Seki M."/>
            <person name="Narusaka M."/>
            <person name="Kamiya A."/>
            <person name="Ishida J."/>
            <person name="Satou M."/>
            <person name="Sakurai T."/>
            <person name="Nakajima M."/>
            <person name="Enju A."/>
            <person name="Akiyama K."/>
            <person name="Oono Y."/>
            <person name="Muramatsu M."/>
            <person name="Hayashizaki Y."/>
            <person name="Kawai J."/>
            <person name="Carninci P."/>
            <person name="Itoh M."/>
            <person name="Ishii Y."/>
            <person name="Arakawa T."/>
            <person name="Shibata K."/>
            <person name="Shinagawa A."/>
            <person name="Shinozaki K."/>
        </authorList>
    </citation>
    <scope>NUCLEOTIDE SEQUENCE [LARGE SCALE MRNA]</scope>
    <source>
        <strain>cv. Columbia</strain>
    </source>
</reference>
<reference key="5">
    <citation type="journal article" date="2003" name="Science">
        <title>Empirical analysis of transcriptional activity in the Arabidopsis genome.</title>
        <authorList>
            <person name="Yamada K."/>
            <person name="Lim J."/>
            <person name="Dale J.M."/>
            <person name="Chen H."/>
            <person name="Shinn P."/>
            <person name="Palm C.J."/>
            <person name="Southwick A.M."/>
            <person name="Wu H.C."/>
            <person name="Kim C.J."/>
            <person name="Nguyen M."/>
            <person name="Pham P.K."/>
            <person name="Cheuk R.F."/>
            <person name="Karlin-Newmann G."/>
            <person name="Liu S.X."/>
            <person name="Lam B."/>
            <person name="Sakano H."/>
            <person name="Wu T."/>
            <person name="Yu G."/>
            <person name="Miranda M."/>
            <person name="Quach H.L."/>
            <person name="Tripp M."/>
            <person name="Chang C.H."/>
            <person name="Lee J.M."/>
            <person name="Toriumi M.J."/>
            <person name="Chan M.M."/>
            <person name="Tang C.C."/>
            <person name="Onodera C.S."/>
            <person name="Deng J.M."/>
            <person name="Akiyama K."/>
            <person name="Ansari Y."/>
            <person name="Arakawa T."/>
            <person name="Banh J."/>
            <person name="Banno F."/>
            <person name="Bowser L."/>
            <person name="Brooks S.Y."/>
            <person name="Carninci P."/>
            <person name="Chao Q."/>
            <person name="Choy N."/>
            <person name="Enju A."/>
            <person name="Goldsmith A.D."/>
            <person name="Gurjal M."/>
            <person name="Hansen N.F."/>
            <person name="Hayashizaki Y."/>
            <person name="Johnson-Hopson C."/>
            <person name="Hsuan V.W."/>
            <person name="Iida K."/>
            <person name="Karnes M."/>
            <person name="Khan S."/>
            <person name="Koesema E."/>
            <person name="Ishida J."/>
            <person name="Jiang P.X."/>
            <person name="Jones T."/>
            <person name="Kawai J."/>
            <person name="Kamiya A."/>
            <person name="Meyers C."/>
            <person name="Nakajima M."/>
            <person name="Narusaka M."/>
            <person name="Seki M."/>
            <person name="Sakurai T."/>
            <person name="Satou M."/>
            <person name="Tamse R."/>
            <person name="Vaysberg M."/>
            <person name="Wallender E.K."/>
            <person name="Wong C."/>
            <person name="Yamamura Y."/>
            <person name="Yuan S."/>
            <person name="Shinozaki K."/>
            <person name="Davis R.W."/>
            <person name="Theologis A."/>
            <person name="Ecker J.R."/>
        </authorList>
    </citation>
    <scope>NUCLEOTIDE SEQUENCE [LARGE SCALE MRNA]</scope>
    <source>
        <strain>cv. Columbia</strain>
    </source>
</reference>
<reference key="6">
    <citation type="journal article" date="2002" name="Plant Physiol.">
        <title>The LATERAL ORGAN BOUNDARIES gene defines a novel, plant-specific gene family.</title>
        <authorList>
            <person name="Shuai B."/>
            <person name="Reynaga-Pena C.G."/>
            <person name="Springer P.S."/>
        </authorList>
    </citation>
    <scope>GENE FAMILY</scope>
    <scope>NOMENCLATURE</scope>
</reference>
<reference key="7">
    <citation type="journal article" date="2002" name="Plant Cell Physiol.">
        <title>The ASYMMETRIC LEAVES2 gene of Arabidopsis thaliana, required for formation of a symmetric flat leaf lamina, encodes a member of a novel family of proteins characterized by cysteine repeats and a leucine zipper.</title>
        <authorList>
            <person name="Iwakawa H."/>
            <person name="Ueno Y."/>
            <person name="Semiarti E."/>
            <person name="Onouchi H."/>
            <person name="Kojima S."/>
            <person name="Tsukaya H."/>
            <person name="Hasebe M."/>
            <person name="Soma T."/>
            <person name="Ikezaki M."/>
            <person name="Machida C."/>
            <person name="Machida Y."/>
        </authorList>
    </citation>
    <scope>GENE FAMILY</scope>
    <scope>NOMENCLATURE</scope>
</reference>
<proteinExistence type="evidence at transcript level"/>
<name>LBD26_ARATH</name>
<comment type="similarity">
    <text evidence="3">Belongs to the LOB domain-containing protein family.</text>
</comment>
<comment type="sequence caution" evidence="3">
    <conflict type="erroneous gene model prediction">
        <sequence resource="EMBL-CDS" id="BAB01481"/>
    </conflict>
</comment>
<keyword id="KW-1185">Reference proteome</keyword>
<feature type="chain" id="PRO_0000132277" description="LOB domain-containing protein 26">
    <location>
        <begin position="1"/>
        <end position="153"/>
    </location>
</feature>
<feature type="domain" description="LOB" evidence="1">
    <location>
        <begin position="4"/>
        <end position="105"/>
    </location>
</feature>
<feature type="region of interest" description="Disordered" evidence="2">
    <location>
        <begin position="126"/>
        <end position="153"/>
    </location>
</feature>
<feature type="compositionally biased region" description="Basic and acidic residues" evidence="2">
    <location>
        <begin position="140"/>
        <end position="153"/>
    </location>
</feature>